<protein>
    <recommendedName>
        <fullName evidence="1">GTP 3',8-cyclase</fullName>
        <ecNumber evidence="1">4.1.99.22</ecNumber>
    </recommendedName>
    <alternativeName>
        <fullName evidence="1">Molybdenum cofactor biosynthesis protein A</fullName>
    </alternativeName>
</protein>
<evidence type="ECO:0000255" key="1">
    <source>
        <dbReference type="HAMAP-Rule" id="MF_01225"/>
    </source>
</evidence>
<evidence type="ECO:0000255" key="2">
    <source>
        <dbReference type="PROSITE-ProRule" id="PRU01266"/>
    </source>
</evidence>
<feature type="chain" id="PRO_1000139324" description="GTP 3',8-cyclase">
    <location>
        <begin position="1"/>
        <end position="329"/>
    </location>
</feature>
<feature type="domain" description="Radical SAM core" evidence="2">
    <location>
        <begin position="8"/>
        <end position="234"/>
    </location>
</feature>
<feature type="binding site" evidence="1">
    <location>
        <position position="17"/>
    </location>
    <ligand>
        <name>GTP</name>
        <dbReference type="ChEBI" id="CHEBI:37565"/>
    </ligand>
</feature>
<feature type="binding site" evidence="1">
    <location>
        <position position="24"/>
    </location>
    <ligand>
        <name>[4Fe-4S] cluster</name>
        <dbReference type="ChEBI" id="CHEBI:49883"/>
        <label>1</label>
        <note>4Fe-4S-S-AdoMet</note>
    </ligand>
</feature>
<feature type="binding site" evidence="1">
    <location>
        <position position="28"/>
    </location>
    <ligand>
        <name>[4Fe-4S] cluster</name>
        <dbReference type="ChEBI" id="CHEBI:49883"/>
        <label>1</label>
        <note>4Fe-4S-S-AdoMet</note>
    </ligand>
</feature>
<feature type="binding site" evidence="1">
    <location>
        <position position="30"/>
    </location>
    <ligand>
        <name>S-adenosyl-L-methionine</name>
        <dbReference type="ChEBI" id="CHEBI:59789"/>
    </ligand>
</feature>
<feature type="binding site" evidence="1">
    <location>
        <position position="31"/>
    </location>
    <ligand>
        <name>[4Fe-4S] cluster</name>
        <dbReference type="ChEBI" id="CHEBI:49883"/>
        <label>1</label>
        <note>4Fe-4S-S-AdoMet</note>
    </ligand>
</feature>
<feature type="binding site" evidence="1">
    <location>
        <position position="68"/>
    </location>
    <ligand>
        <name>GTP</name>
        <dbReference type="ChEBI" id="CHEBI:37565"/>
    </ligand>
</feature>
<feature type="binding site" evidence="1">
    <location>
        <position position="72"/>
    </location>
    <ligand>
        <name>S-adenosyl-L-methionine</name>
        <dbReference type="ChEBI" id="CHEBI:59789"/>
    </ligand>
</feature>
<feature type="binding site" evidence="1">
    <location>
        <position position="99"/>
    </location>
    <ligand>
        <name>GTP</name>
        <dbReference type="ChEBI" id="CHEBI:37565"/>
    </ligand>
</feature>
<feature type="binding site" evidence="1">
    <location>
        <position position="123"/>
    </location>
    <ligand>
        <name>S-adenosyl-L-methionine</name>
        <dbReference type="ChEBI" id="CHEBI:59789"/>
    </ligand>
</feature>
<feature type="binding site" evidence="1">
    <location>
        <position position="160"/>
    </location>
    <ligand>
        <name>GTP</name>
        <dbReference type="ChEBI" id="CHEBI:37565"/>
    </ligand>
</feature>
<feature type="binding site" evidence="1">
    <location>
        <position position="194"/>
    </location>
    <ligand>
        <name>S-adenosyl-L-methionine</name>
        <dbReference type="ChEBI" id="CHEBI:59789"/>
    </ligand>
</feature>
<feature type="binding site" evidence="1">
    <location>
        <position position="257"/>
    </location>
    <ligand>
        <name>[4Fe-4S] cluster</name>
        <dbReference type="ChEBI" id="CHEBI:49883"/>
        <label>2</label>
        <note>4Fe-4S-substrate</note>
    </ligand>
</feature>
<feature type="binding site" evidence="1">
    <location>
        <position position="260"/>
    </location>
    <ligand>
        <name>[4Fe-4S] cluster</name>
        <dbReference type="ChEBI" id="CHEBI:49883"/>
        <label>2</label>
        <note>4Fe-4S-substrate</note>
    </ligand>
</feature>
<feature type="binding site" evidence="1">
    <location>
        <begin position="262"/>
        <end position="264"/>
    </location>
    <ligand>
        <name>GTP</name>
        <dbReference type="ChEBI" id="CHEBI:37565"/>
    </ligand>
</feature>
<feature type="binding site" evidence="1">
    <location>
        <position position="274"/>
    </location>
    <ligand>
        <name>[4Fe-4S] cluster</name>
        <dbReference type="ChEBI" id="CHEBI:49883"/>
        <label>2</label>
        <note>4Fe-4S-substrate</note>
    </ligand>
</feature>
<comment type="function">
    <text evidence="1">Catalyzes the cyclization of GTP to (8S)-3',8-cyclo-7,8-dihydroguanosine 5'-triphosphate.</text>
</comment>
<comment type="catalytic activity">
    <reaction evidence="1">
        <text>GTP + AH2 + S-adenosyl-L-methionine = (8S)-3',8-cyclo-7,8-dihydroguanosine 5'-triphosphate + 5'-deoxyadenosine + L-methionine + A + H(+)</text>
        <dbReference type="Rhea" id="RHEA:49576"/>
        <dbReference type="ChEBI" id="CHEBI:13193"/>
        <dbReference type="ChEBI" id="CHEBI:15378"/>
        <dbReference type="ChEBI" id="CHEBI:17319"/>
        <dbReference type="ChEBI" id="CHEBI:17499"/>
        <dbReference type="ChEBI" id="CHEBI:37565"/>
        <dbReference type="ChEBI" id="CHEBI:57844"/>
        <dbReference type="ChEBI" id="CHEBI:59789"/>
        <dbReference type="ChEBI" id="CHEBI:131766"/>
        <dbReference type="EC" id="4.1.99.22"/>
    </reaction>
</comment>
<comment type="cofactor">
    <cofactor evidence="1">
        <name>[4Fe-4S] cluster</name>
        <dbReference type="ChEBI" id="CHEBI:49883"/>
    </cofactor>
    <text evidence="1">Binds 2 [4Fe-4S] clusters. Binds 1 [4Fe-4S] cluster coordinated with 3 cysteines and an exchangeable S-adenosyl-L-methionine and 1 [4Fe-4S] cluster coordinated with 3 cysteines and the GTP-derived substrate.</text>
</comment>
<comment type="pathway">
    <text evidence="1">Cofactor biosynthesis; molybdopterin biosynthesis.</text>
</comment>
<comment type="subunit">
    <text evidence="1">Monomer and homodimer.</text>
</comment>
<comment type="similarity">
    <text evidence="1">Belongs to the radical SAM superfamily. MoaA family.</text>
</comment>
<name>MOAA_ECOSE</name>
<proteinExistence type="inferred from homology"/>
<gene>
    <name evidence="1" type="primary">moaA</name>
    <name type="ordered locus">ECSE_0835</name>
</gene>
<dbReference type="EC" id="4.1.99.22" evidence="1"/>
<dbReference type="EMBL" id="AP009240">
    <property type="protein sequence ID" value="BAG76359.1"/>
    <property type="molecule type" value="Genomic_DNA"/>
</dbReference>
<dbReference type="RefSeq" id="WP_001295301.1">
    <property type="nucleotide sequence ID" value="NC_011415.1"/>
</dbReference>
<dbReference type="SMR" id="B6I7T6"/>
<dbReference type="GeneID" id="86863291"/>
<dbReference type="KEGG" id="ecy:ECSE_0835"/>
<dbReference type="HOGENOM" id="CLU_009273_0_1_6"/>
<dbReference type="UniPathway" id="UPA00344"/>
<dbReference type="Proteomes" id="UP000008199">
    <property type="component" value="Chromosome"/>
</dbReference>
<dbReference type="GO" id="GO:0051539">
    <property type="term" value="F:4 iron, 4 sulfur cluster binding"/>
    <property type="evidence" value="ECO:0007669"/>
    <property type="project" value="UniProtKB-UniRule"/>
</dbReference>
<dbReference type="GO" id="GO:0061799">
    <property type="term" value="F:cyclic pyranopterin monophosphate synthase activity"/>
    <property type="evidence" value="ECO:0007669"/>
    <property type="project" value="TreeGrafter"/>
</dbReference>
<dbReference type="GO" id="GO:0061798">
    <property type="term" value="F:GTP 3',8'-cyclase activity"/>
    <property type="evidence" value="ECO:0007669"/>
    <property type="project" value="UniProtKB-UniRule"/>
</dbReference>
<dbReference type="GO" id="GO:0005525">
    <property type="term" value="F:GTP binding"/>
    <property type="evidence" value="ECO:0007669"/>
    <property type="project" value="UniProtKB-UniRule"/>
</dbReference>
<dbReference type="GO" id="GO:0046872">
    <property type="term" value="F:metal ion binding"/>
    <property type="evidence" value="ECO:0007669"/>
    <property type="project" value="UniProtKB-KW"/>
</dbReference>
<dbReference type="GO" id="GO:1904047">
    <property type="term" value="F:S-adenosyl-L-methionine binding"/>
    <property type="evidence" value="ECO:0007669"/>
    <property type="project" value="UniProtKB-UniRule"/>
</dbReference>
<dbReference type="GO" id="GO:0006777">
    <property type="term" value="P:Mo-molybdopterin cofactor biosynthetic process"/>
    <property type="evidence" value="ECO:0007669"/>
    <property type="project" value="UniProtKB-UniRule"/>
</dbReference>
<dbReference type="CDD" id="cd01335">
    <property type="entry name" value="Radical_SAM"/>
    <property type="match status" value="1"/>
</dbReference>
<dbReference type="CDD" id="cd21117">
    <property type="entry name" value="Twitch_MoaA"/>
    <property type="match status" value="1"/>
</dbReference>
<dbReference type="FunFam" id="3.20.20.70:FF:000057">
    <property type="entry name" value="GTP 3',8-cyclase"/>
    <property type="match status" value="1"/>
</dbReference>
<dbReference type="Gene3D" id="3.20.20.70">
    <property type="entry name" value="Aldolase class I"/>
    <property type="match status" value="1"/>
</dbReference>
<dbReference type="HAMAP" id="MF_01225_B">
    <property type="entry name" value="MoaA_B"/>
    <property type="match status" value="1"/>
</dbReference>
<dbReference type="InterPro" id="IPR013785">
    <property type="entry name" value="Aldolase_TIM"/>
</dbReference>
<dbReference type="InterPro" id="IPR006638">
    <property type="entry name" value="Elp3/MiaA/NifB-like_rSAM"/>
</dbReference>
<dbReference type="InterPro" id="IPR013483">
    <property type="entry name" value="MoaA"/>
</dbReference>
<dbReference type="InterPro" id="IPR000385">
    <property type="entry name" value="MoaA_NifB_PqqE_Fe-S-bd_CS"/>
</dbReference>
<dbReference type="InterPro" id="IPR010505">
    <property type="entry name" value="MoaA_twitch"/>
</dbReference>
<dbReference type="InterPro" id="IPR050105">
    <property type="entry name" value="MoCo_biosynth_MoaA/MoaC"/>
</dbReference>
<dbReference type="InterPro" id="IPR007197">
    <property type="entry name" value="rSAM"/>
</dbReference>
<dbReference type="NCBIfam" id="TIGR02666">
    <property type="entry name" value="moaA"/>
    <property type="match status" value="1"/>
</dbReference>
<dbReference type="PANTHER" id="PTHR22960:SF28">
    <property type="entry name" value="GTP 3',8-CYCLASE"/>
    <property type="match status" value="1"/>
</dbReference>
<dbReference type="PANTHER" id="PTHR22960">
    <property type="entry name" value="MOLYBDOPTERIN COFACTOR SYNTHESIS PROTEIN A"/>
    <property type="match status" value="1"/>
</dbReference>
<dbReference type="Pfam" id="PF13353">
    <property type="entry name" value="Fer4_12"/>
    <property type="match status" value="1"/>
</dbReference>
<dbReference type="Pfam" id="PF06463">
    <property type="entry name" value="Mob_synth_C"/>
    <property type="match status" value="1"/>
</dbReference>
<dbReference type="Pfam" id="PF04055">
    <property type="entry name" value="Radical_SAM"/>
    <property type="match status" value="1"/>
</dbReference>
<dbReference type="SFLD" id="SFLDG01383">
    <property type="entry name" value="cyclic_pyranopterin_phosphate"/>
    <property type="match status" value="1"/>
</dbReference>
<dbReference type="SFLD" id="SFLDG01072">
    <property type="entry name" value="dehydrogenase_like"/>
    <property type="match status" value="1"/>
</dbReference>
<dbReference type="SMART" id="SM00729">
    <property type="entry name" value="Elp3"/>
    <property type="match status" value="1"/>
</dbReference>
<dbReference type="SUPFAM" id="SSF102114">
    <property type="entry name" value="Radical SAM enzymes"/>
    <property type="match status" value="1"/>
</dbReference>
<dbReference type="PROSITE" id="PS01305">
    <property type="entry name" value="MOAA_NIFB_PQQE"/>
    <property type="match status" value="1"/>
</dbReference>
<dbReference type="PROSITE" id="PS51918">
    <property type="entry name" value="RADICAL_SAM"/>
    <property type="match status" value="1"/>
</dbReference>
<accession>B6I7T6</accession>
<keyword id="KW-0004">4Fe-4S</keyword>
<keyword id="KW-0342">GTP-binding</keyword>
<keyword id="KW-0408">Iron</keyword>
<keyword id="KW-0411">Iron-sulfur</keyword>
<keyword id="KW-0456">Lyase</keyword>
<keyword id="KW-0479">Metal-binding</keyword>
<keyword id="KW-0501">Molybdenum cofactor biosynthesis</keyword>
<keyword id="KW-0547">Nucleotide-binding</keyword>
<keyword id="KW-0949">S-adenosyl-L-methionine</keyword>
<organism>
    <name type="scientific">Escherichia coli (strain SE11)</name>
    <dbReference type="NCBI Taxonomy" id="409438"/>
    <lineage>
        <taxon>Bacteria</taxon>
        <taxon>Pseudomonadati</taxon>
        <taxon>Pseudomonadota</taxon>
        <taxon>Gammaproteobacteria</taxon>
        <taxon>Enterobacterales</taxon>
        <taxon>Enterobacteriaceae</taxon>
        <taxon>Escherichia</taxon>
    </lineage>
</organism>
<reference key="1">
    <citation type="journal article" date="2008" name="DNA Res.">
        <title>Complete genome sequence and comparative analysis of the wild-type commensal Escherichia coli strain SE11 isolated from a healthy adult.</title>
        <authorList>
            <person name="Oshima K."/>
            <person name="Toh H."/>
            <person name="Ogura Y."/>
            <person name="Sasamoto H."/>
            <person name="Morita H."/>
            <person name="Park S.-H."/>
            <person name="Ooka T."/>
            <person name="Iyoda S."/>
            <person name="Taylor T.D."/>
            <person name="Hayashi T."/>
            <person name="Itoh K."/>
            <person name="Hattori M."/>
        </authorList>
    </citation>
    <scope>NUCLEOTIDE SEQUENCE [LARGE SCALE GENOMIC DNA]</scope>
    <source>
        <strain>SE11</strain>
    </source>
</reference>
<sequence>MASQLTDAFARKFYYLRLSITDVCNFRCTYCLPDGYKPSGVTNKGFLTVDEIRRVTRAFASLGTEKVRLTGGEPSLRRDFTDIIAAVRENDAIRQIAVTTNGYRLERDVANWRDAGLTGINVSVDSLDARQFHAITGQDKFNQVMAGIDAAFEAGFEKVKVNTVLMRDVNHHQLDTFLNWIQHRPIQLRFIELMETGEGSELFRKHHISGQVLRDELLRRGWIHQLRQRSDGPAQVFCHPDYAGEIGLIMPYEKDFCATCNRLRVSSIGKLHLCLFGEGGVNLRDLLEDDTQQQALEARISAALREKKQTHFLHQNNTGITQNLSYIGG</sequence>